<feature type="signal peptide" evidence="1">
    <location>
        <begin position="1"/>
        <end position="21"/>
    </location>
</feature>
<feature type="chain" id="PRO_5000279913" description="Short neurotoxin 1">
    <location>
        <begin position="22"/>
        <end position="81"/>
    </location>
</feature>
<feature type="disulfide bond" evidence="2">
    <location>
        <begin position="24"/>
        <end position="43"/>
    </location>
</feature>
<feature type="disulfide bond" evidence="2">
    <location>
        <begin position="38"/>
        <end position="60"/>
    </location>
</feature>
<feature type="disulfide bond" evidence="2">
    <location>
        <begin position="62"/>
        <end position="73"/>
    </location>
</feature>
<feature type="disulfide bond" evidence="2">
    <location>
        <begin position="74"/>
        <end position="79"/>
    </location>
</feature>
<sequence length="81" mass="8982">MKTLLLTLVVVTIVFLDLGYTMTCCNQQSSQPKTTTTCAESSCYKKTWRDHRGTITERGCGCPNVKPGVQINCCKTDECNN</sequence>
<accession>A8HDK0</accession>
<evidence type="ECO:0000250" key="1"/>
<evidence type="ECO:0000250" key="2">
    <source>
        <dbReference type="UniProtKB" id="P0C1Z0"/>
    </source>
</evidence>
<evidence type="ECO:0000250" key="3">
    <source>
        <dbReference type="UniProtKB" id="P60775"/>
    </source>
</evidence>
<evidence type="ECO:0000305" key="4"/>
<protein>
    <recommendedName>
        <fullName>Short neurotoxin 1</fullName>
        <shortName>SNTX-1</shortName>
    </recommendedName>
</protein>
<organism>
    <name type="scientific">Notechis scutatus scutatus</name>
    <name type="common">Mainland tiger snake</name>
    <name type="synonym">Common tiger snake</name>
    <dbReference type="NCBI Taxonomy" id="70142"/>
    <lineage>
        <taxon>Eukaryota</taxon>
        <taxon>Metazoa</taxon>
        <taxon>Chordata</taxon>
        <taxon>Craniata</taxon>
        <taxon>Vertebrata</taxon>
        <taxon>Euteleostomi</taxon>
        <taxon>Lepidosauria</taxon>
        <taxon>Squamata</taxon>
        <taxon>Bifurcata</taxon>
        <taxon>Unidentata</taxon>
        <taxon>Episquamata</taxon>
        <taxon>Toxicofera</taxon>
        <taxon>Serpentes</taxon>
        <taxon>Colubroidea</taxon>
        <taxon>Elapidae</taxon>
        <taxon>Hydrophiinae</taxon>
        <taxon>Notechis</taxon>
    </lineage>
</organism>
<comment type="function">
    <text evidence="3">Binds to muscle nicotinic acetylcholine receptor (nAChR) and inhibit acetylcholine from binding to the receptor, thereby impairing neuromuscular transmission.</text>
</comment>
<comment type="subcellular location">
    <subcellularLocation>
        <location evidence="1">Secreted</location>
    </subcellularLocation>
</comment>
<comment type="tissue specificity">
    <text evidence="4">Expressed by the venom gland.</text>
</comment>
<comment type="similarity">
    <text evidence="4">Belongs to the three-finger toxin family. Short-chain subfamily. Type I alpha-neurotoxin sub-subfamily.</text>
</comment>
<keyword id="KW-0008">Acetylcholine receptor inhibiting toxin</keyword>
<keyword id="KW-1015">Disulfide bond</keyword>
<keyword id="KW-0872">Ion channel impairing toxin</keyword>
<keyword id="KW-0528">Neurotoxin</keyword>
<keyword id="KW-0629">Postsynaptic neurotoxin</keyword>
<keyword id="KW-0964">Secreted</keyword>
<keyword id="KW-0732">Signal</keyword>
<keyword id="KW-0800">Toxin</keyword>
<proteinExistence type="inferred from homology"/>
<name>3S11_NOTSC</name>
<dbReference type="EMBL" id="DQ917505">
    <property type="protein sequence ID" value="ABK63534.1"/>
    <property type="molecule type" value="mRNA"/>
</dbReference>
<dbReference type="SMR" id="A8HDK0"/>
<dbReference type="GO" id="GO:0005576">
    <property type="term" value="C:extracellular region"/>
    <property type="evidence" value="ECO:0007669"/>
    <property type="project" value="UniProtKB-SubCell"/>
</dbReference>
<dbReference type="GO" id="GO:0030550">
    <property type="term" value="F:acetylcholine receptor inhibitor activity"/>
    <property type="evidence" value="ECO:0007669"/>
    <property type="project" value="UniProtKB-KW"/>
</dbReference>
<dbReference type="GO" id="GO:0099106">
    <property type="term" value="F:ion channel regulator activity"/>
    <property type="evidence" value="ECO:0007669"/>
    <property type="project" value="UniProtKB-KW"/>
</dbReference>
<dbReference type="GO" id="GO:0090729">
    <property type="term" value="F:toxin activity"/>
    <property type="evidence" value="ECO:0007669"/>
    <property type="project" value="UniProtKB-KW"/>
</dbReference>
<dbReference type="CDD" id="cd00206">
    <property type="entry name" value="TFP_snake_toxin"/>
    <property type="match status" value="1"/>
</dbReference>
<dbReference type="FunFam" id="2.10.60.10:FF:000024">
    <property type="entry name" value="Cytotoxin 1"/>
    <property type="match status" value="1"/>
</dbReference>
<dbReference type="Gene3D" id="2.10.60.10">
    <property type="entry name" value="CD59"/>
    <property type="match status" value="1"/>
</dbReference>
<dbReference type="InterPro" id="IPR003571">
    <property type="entry name" value="Snake_3FTx"/>
</dbReference>
<dbReference type="InterPro" id="IPR045860">
    <property type="entry name" value="Snake_toxin-like_sf"/>
</dbReference>
<dbReference type="InterPro" id="IPR018354">
    <property type="entry name" value="Snake_toxin_con_site"/>
</dbReference>
<dbReference type="InterPro" id="IPR054131">
    <property type="entry name" value="Toxin_cobra-type"/>
</dbReference>
<dbReference type="Pfam" id="PF21947">
    <property type="entry name" value="Toxin_cobra-type"/>
    <property type="match status" value="1"/>
</dbReference>
<dbReference type="SUPFAM" id="SSF57302">
    <property type="entry name" value="Snake toxin-like"/>
    <property type="match status" value="1"/>
</dbReference>
<dbReference type="PROSITE" id="PS00272">
    <property type="entry name" value="SNAKE_TOXIN"/>
    <property type="match status" value="1"/>
</dbReference>
<reference key="1">
    <citation type="journal article" date="2007" name="Cell. Mol. Life Sci.">
        <title>Distinct activities of novel neurotoxins from Australian venomous snakes for nicotinic acetylcholine receptors.</title>
        <authorList>
            <person name="St Pierre L."/>
            <person name="Fischer H."/>
            <person name="Adams D.J."/>
            <person name="Schenning M."/>
            <person name="Lavidis N."/>
            <person name="de Jersey J."/>
            <person name="Masci P.P."/>
            <person name="Lavin M.F."/>
        </authorList>
    </citation>
    <scope>NUCLEOTIDE SEQUENCE [MRNA]</scope>
    <source>
        <tissue>Venom gland</tissue>
    </source>
</reference>